<reference key="1">
    <citation type="journal article" date="2004" name="Microbiology">
        <title>Multiplication of an ancestral gene encoding secreted fungalysin preceded species differentiation in the dermatophytes Trichophyton and Microsporum.</title>
        <authorList>
            <person name="Jousson O."/>
            <person name="Lechenne B."/>
            <person name="Bontems O."/>
            <person name="Capoccia S."/>
            <person name="Mignon B."/>
            <person name="Barblan J."/>
            <person name="Quadroni M."/>
            <person name="Monod M."/>
        </authorList>
    </citation>
    <scope>NUCLEOTIDE SEQUENCE [GENOMIC DNA]</scope>
    <source>
        <strain>LAU709-03</strain>
    </source>
</reference>
<sequence>MHGLLLAAGLLSLPLHVLAHPQPGTSLAGRAVDLNAYRMADRASYMSSDEMQAQQPHIASVSAGGYVETATEVVKRVMPGMTFRLVDDHYVGVSGISHVYFRQTMHGMDIDNSDFNVNIGKDGKVLSYGNSFYTGPAPDKAPMVKRDFSDPMQALHGVRKALNLPITADKATVKTVNEHEVTFMGTTGALSDPSAKLCYMAKEDGSLALTWRVETDMGDNWLLSYVDAKSTDQVHNVVDYVSHATYQVYRWPIPDPTEGKREILENPWNLRTSPFTWISDGKNNYTTTRGNNAIAQANPDGGNEYLNNYRPNNKNLKFEYPYSPNMSPPKTYIDASITQLFYSANMVHDLYYMLGFTEKAGNFQVNNRGQGGKGNDFVILNAQDGSGTNNANFATPPDGQPGRMRVYIWTKAQPARDSSFEAGTVIHEYTHGLSNRLCGGPANSACLNGLESGGMGEGWGDFFATAIRLKPNDNRNANYVHGEWVNNSPKGNRLFPYSTSLKTNPLVYTSCNKYNEVHAIGTVWASILYEVLWNLIDKHGKNDGPTPVFENGVPKDGKYLSLKLVLDGMAIQPCKPNFVQARNAIIDADKNLTKGANKCELWKAFAKRGLGTGAKYDPKNRTGSTAVPKECQ</sequence>
<gene>
    <name type="primary">MEP5</name>
</gene>
<protein>
    <recommendedName>
        <fullName>Extracellular metalloproteinase 5</fullName>
        <ecNumber>3.4.24.-</ecNumber>
    </recommendedName>
    <alternativeName>
        <fullName>Fungalysin MEP5</fullName>
    </alternativeName>
</protein>
<accession>Q6WIH7</accession>
<keyword id="KW-0325">Glycoprotein</keyword>
<keyword id="KW-0378">Hydrolase</keyword>
<keyword id="KW-0479">Metal-binding</keyword>
<keyword id="KW-0482">Metalloprotease</keyword>
<keyword id="KW-0645">Protease</keyword>
<keyword id="KW-0964">Secreted</keyword>
<keyword id="KW-0732">Signal</keyword>
<keyword id="KW-0843">Virulence</keyword>
<keyword id="KW-0862">Zinc</keyword>
<keyword id="KW-0865">Zymogen</keyword>
<feature type="signal peptide" evidence="2">
    <location>
        <begin position="1"/>
        <end position="20"/>
    </location>
</feature>
<feature type="propeptide" id="PRO_0000380876" evidence="1">
    <location>
        <begin position="21"/>
        <end position="244"/>
    </location>
</feature>
<feature type="chain" id="PRO_0000380877" description="Extracellular metalloproteinase 5">
    <location>
        <begin position="245"/>
        <end position="632"/>
    </location>
</feature>
<feature type="active site" evidence="3">
    <location>
        <position position="428"/>
    </location>
</feature>
<feature type="binding site" evidence="3">
    <location>
        <position position="427"/>
    </location>
    <ligand>
        <name>Zn(2+)</name>
        <dbReference type="ChEBI" id="CHEBI:29105"/>
        <note>catalytic</note>
    </ligand>
</feature>
<feature type="binding site" evidence="3">
    <location>
        <position position="431"/>
    </location>
    <ligand>
        <name>Zn(2+)</name>
        <dbReference type="ChEBI" id="CHEBI:29105"/>
        <note>catalytic</note>
    </ligand>
</feature>
<feature type="glycosylation site" description="N-linked (GlcNAc...) asparagine" evidence="2">
    <location>
        <position position="284"/>
    </location>
</feature>
<feature type="glycosylation site" description="N-linked (GlcNAc...) asparagine" evidence="2">
    <location>
        <position position="591"/>
    </location>
</feature>
<feature type="glycosylation site" description="N-linked (GlcNAc...) asparagine" evidence="2">
    <location>
        <position position="620"/>
    </location>
</feature>
<dbReference type="EC" id="3.4.24.-"/>
<dbReference type="EMBL" id="AY283570">
    <property type="protein sequence ID" value="AAQ21095.1"/>
    <property type="molecule type" value="Genomic_DNA"/>
</dbReference>
<dbReference type="SMR" id="Q6WIH7"/>
<dbReference type="MEROPS" id="M36.001"/>
<dbReference type="GlyCosmos" id="Q6WIH7">
    <property type="glycosylation" value="3 sites, No reported glycans"/>
</dbReference>
<dbReference type="GO" id="GO:0005576">
    <property type="term" value="C:extracellular region"/>
    <property type="evidence" value="ECO:0007669"/>
    <property type="project" value="UniProtKB-SubCell"/>
</dbReference>
<dbReference type="GO" id="GO:0004222">
    <property type="term" value="F:metalloendopeptidase activity"/>
    <property type="evidence" value="ECO:0007669"/>
    <property type="project" value="InterPro"/>
</dbReference>
<dbReference type="GO" id="GO:0008270">
    <property type="term" value="F:zinc ion binding"/>
    <property type="evidence" value="ECO:0007669"/>
    <property type="project" value="InterPro"/>
</dbReference>
<dbReference type="GO" id="GO:0006508">
    <property type="term" value="P:proteolysis"/>
    <property type="evidence" value="ECO:0007669"/>
    <property type="project" value="UniProtKB-KW"/>
</dbReference>
<dbReference type="CDD" id="cd09596">
    <property type="entry name" value="M36"/>
    <property type="match status" value="1"/>
</dbReference>
<dbReference type="Gene3D" id="3.10.170.10">
    <property type="match status" value="1"/>
</dbReference>
<dbReference type="Gene3D" id="1.10.390.10">
    <property type="entry name" value="Neutral Protease Domain 2"/>
    <property type="match status" value="1"/>
</dbReference>
<dbReference type="InterPro" id="IPR011096">
    <property type="entry name" value="FTP_domain"/>
</dbReference>
<dbReference type="InterPro" id="IPR050371">
    <property type="entry name" value="Fungal_virulence_M36"/>
</dbReference>
<dbReference type="InterPro" id="IPR001842">
    <property type="entry name" value="Peptidase_M36"/>
</dbReference>
<dbReference type="InterPro" id="IPR027268">
    <property type="entry name" value="Peptidase_M4/M1_CTD_sf"/>
</dbReference>
<dbReference type="PANTHER" id="PTHR33478">
    <property type="entry name" value="EXTRACELLULAR METALLOPROTEINASE MEP"/>
    <property type="match status" value="1"/>
</dbReference>
<dbReference type="PANTHER" id="PTHR33478:SF1">
    <property type="entry name" value="EXTRACELLULAR METALLOPROTEINASE MEP"/>
    <property type="match status" value="1"/>
</dbReference>
<dbReference type="Pfam" id="PF07504">
    <property type="entry name" value="FTP"/>
    <property type="match status" value="1"/>
</dbReference>
<dbReference type="Pfam" id="PF02128">
    <property type="entry name" value="Peptidase_M36"/>
    <property type="match status" value="1"/>
</dbReference>
<dbReference type="PRINTS" id="PR00999">
    <property type="entry name" value="FUNGALYSIN"/>
</dbReference>
<dbReference type="SUPFAM" id="SSF55486">
    <property type="entry name" value="Metalloproteases ('zincins'), catalytic domain"/>
    <property type="match status" value="1"/>
</dbReference>
<dbReference type="PROSITE" id="PS00142">
    <property type="entry name" value="ZINC_PROTEASE"/>
    <property type="match status" value="1"/>
</dbReference>
<evidence type="ECO:0000250" key="1"/>
<evidence type="ECO:0000255" key="2"/>
<evidence type="ECO:0000255" key="3">
    <source>
        <dbReference type="PROSITE-ProRule" id="PRU10095"/>
    </source>
</evidence>
<evidence type="ECO:0000305" key="4"/>
<organism>
    <name type="scientific">Arthroderma otae</name>
    <name type="common">Microsporum canis</name>
    <dbReference type="NCBI Taxonomy" id="63405"/>
    <lineage>
        <taxon>Eukaryota</taxon>
        <taxon>Fungi</taxon>
        <taxon>Dikarya</taxon>
        <taxon>Ascomycota</taxon>
        <taxon>Pezizomycotina</taxon>
        <taxon>Eurotiomycetes</taxon>
        <taxon>Eurotiomycetidae</taxon>
        <taxon>Onygenales</taxon>
        <taxon>Arthrodermataceae</taxon>
        <taxon>Microsporum</taxon>
    </lineage>
</organism>
<proteinExistence type="inferred from homology"/>
<name>MEP5_ARTOT</name>
<comment type="function">
    <text evidence="1">Secreted metalloproteinase probably acting as a virulence factor.</text>
</comment>
<comment type="cofactor">
    <cofactor evidence="1">
        <name>Zn(2+)</name>
        <dbReference type="ChEBI" id="CHEBI:29105"/>
    </cofactor>
    <text evidence="1">Binds 1 zinc ion per subunit.</text>
</comment>
<comment type="subcellular location">
    <subcellularLocation>
        <location evidence="1">Secreted</location>
    </subcellularLocation>
</comment>
<comment type="similarity">
    <text evidence="4">Belongs to the peptidase M36 family.</text>
</comment>